<dbReference type="EC" id="2.1.1.189" evidence="1"/>
<dbReference type="EMBL" id="CP001585">
    <property type="protein sequence ID" value="ACY58091.1"/>
    <property type="status" value="ALT_FRAME"/>
    <property type="molecule type" value="Genomic_DNA"/>
</dbReference>
<dbReference type="EMBL" id="CP001585">
    <property type="protein sequence ID" value="ACY58092.1"/>
    <property type="status" value="ALT_FRAME"/>
    <property type="molecule type" value="Genomic_DNA"/>
</dbReference>
<dbReference type="SMR" id="D0JIM5"/>
<dbReference type="KEGG" id="ypd:YPD4_1183"/>
<dbReference type="KEGG" id="ypd:YPD4_1184"/>
<dbReference type="PATRIC" id="fig|637382.3.peg.1556"/>
<dbReference type="HOGENOM" id="CLU_126003_0_0_6"/>
<dbReference type="GO" id="GO:0051539">
    <property type="term" value="F:4 iron, 4 sulfur cluster binding"/>
    <property type="evidence" value="ECO:0007669"/>
    <property type="project" value="UniProtKB-KW"/>
</dbReference>
<dbReference type="GO" id="GO:0005506">
    <property type="term" value="F:iron ion binding"/>
    <property type="evidence" value="ECO:0007669"/>
    <property type="project" value="UniProtKB-UniRule"/>
</dbReference>
<dbReference type="GO" id="GO:0070041">
    <property type="term" value="F:rRNA (uridine-C5-)-methyltransferase activity"/>
    <property type="evidence" value="ECO:0007669"/>
    <property type="project" value="UniProtKB-UniRule"/>
</dbReference>
<dbReference type="GO" id="GO:0070475">
    <property type="term" value="P:rRNA base methylation"/>
    <property type="evidence" value="ECO:0007669"/>
    <property type="project" value="TreeGrafter"/>
</dbReference>
<dbReference type="CDD" id="cd02440">
    <property type="entry name" value="AdoMet_MTases"/>
    <property type="match status" value="1"/>
</dbReference>
<dbReference type="FunFam" id="2.40.50.1070:FF:000002">
    <property type="entry name" value="23S rRNA (uracil(747)-C(5))-methyltransferase RlmC"/>
    <property type="match status" value="1"/>
</dbReference>
<dbReference type="Gene3D" id="2.40.50.1070">
    <property type="match status" value="1"/>
</dbReference>
<dbReference type="Gene3D" id="3.40.50.150">
    <property type="entry name" value="Vaccinia Virus protein VP39"/>
    <property type="match status" value="1"/>
</dbReference>
<dbReference type="HAMAP" id="MF_01012">
    <property type="entry name" value="23SrRNA_methyltr_RlmC"/>
    <property type="match status" value="1"/>
</dbReference>
<dbReference type="InterPro" id="IPR011825">
    <property type="entry name" value="23SrRNA_MeTrfase_RlmC"/>
</dbReference>
<dbReference type="InterPro" id="IPR030390">
    <property type="entry name" value="MeTrfase_TrmA_AS"/>
</dbReference>
<dbReference type="InterPro" id="IPR030391">
    <property type="entry name" value="MeTrfase_TrmA_CS"/>
</dbReference>
<dbReference type="InterPro" id="IPR029063">
    <property type="entry name" value="SAM-dependent_MTases_sf"/>
</dbReference>
<dbReference type="InterPro" id="IPR010280">
    <property type="entry name" value="U5_MeTrfase_fam"/>
</dbReference>
<dbReference type="NCBIfam" id="TIGR02085">
    <property type="entry name" value="meth_trns_rumB"/>
    <property type="match status" value="1"/>
</dbReference>
<dbReference type="NCBIfam" id="TIGR00479">
    <property type="entry name" value="rumA"/>
    <property type="match status" value="1"/>
</dbReference>
<dbReference type="PANTHER" id="PTHR11061">
    <property type="entry name" value="RNA M5U METHYLTRANSFERASE"/>
    <property type="match status" value="1"/>
</dbReference>
<dbReference type="PANTHER" id="PTHR11061:SF30">
    <property type="entry name" value="TRNA (URACIL(54)-C(5))-METHYLTRANSFERASE"/>
    <property type="match status" value="1"/>
</dbReference>
<dbReference type="Pfam" id="PF05958">
    <property type="entry name" value="tRNA_U5-meth_tr"/>
    <property type="match status" value="1"/>
</dbReference>
<dbReference type="SUPFAM" id="SSF53335">
    <property type="entry name" value="S-adenosyl-L-methionine-dependent methyltransferases"/>
    <property type="match status" value="1"/>
</dbReference>
<dbReference type="PROSITE" id="PS51687">
    <property type="entry name" value="SAM_MT_RNA_M5U"/>
    <property type="match status" value="1"/>
</dbReference>
<dbReference type="PROSITE" id="PS01230">
    <property type="entry name" value="TRMA_1"/>
    <property type="match status" value="1"/>
</dbReference>
<dbReference type="PROSITE" id="PS01231">
    <property type="entry name" value="TRMA_2"/>
    <property type="match status" value="1"/>
</dbReference>
<organism>
    <name type="scientific">Yersinia pestis (strain D106004)</name>
    <dbReference type="NCBI Taxonomy" id="637382"/>
    <lineage>
        <taxon>Bacteria</taxon>
        <taxon>Pseudomonadati</taxon>
        <taxon>Pseudomonadota</taxon>
        <taxon>Gammaproteobacteria</taxon>
        <taxon>Enterobacterales</taxon>
        <taxon>Yersiniaceae</taxon>
        <taxon>Yersinia</taxon>
    </lineage>
</organism>
<name>RLMC_YERPD</name>
<gene>
    <name evidence="1" type="primary">rlmC</name>
    <name type="ordered locus">YPD4_1183/YPD4_1184</name>
</gene>
<sequence>MHCAQYTAGRCRSCQWLDKPYPQQLADKQHHLESLLAGHAVTQWLAPVFGRESAFRNKAKMVVSGSVERPLLGMLHRDGTPVDLCACPLYPPSFEPVFTVLKTFIARAGLTPYNVARKRGELKFLLLTESTYNGELMLRFVLRSETKLAQLIAALPWLQQQLPQLAVISANIQPVHMAILEGEREIPLTEQQALPERFNQVPLYIRPQSFFQTNPQVAASLYATARQWVQEHEVHSMWDLFCGVGGFGLHCAGPETQLTGIEINAEAIACARQSAEQLGLKNVSFAALDSTRFATAEAQIPELVLVNPPRRGIGRELCDYLSQMAPKFILYSSCNAETMAKDISLLAGYHIERVQLFDMFPHTSHYEVLTLLTLRR</sequence>
<feature type="chain" id="PRO_0000414827" description="23S rRNA (uracil(747)-C(5))-methyltransferase RlmC">
    <location>
        <begin position="1"/>
        <end position="376"/>
    </location>
</feature>
<feature type="active site" description="Nucleophile" evidence="1">
    <location>
        <position position="334"/>
    </location>
</feature>
<feature type="binding site" evidence="1">
    <location>
        <position position="3"/>
    </location>
    <ligand>
        <name>[4Fe-4S] cluster</name>
        <dbReference type="ChEBI" id="CHEBI:49883"/>
    </ligand>
</feature>
<feature type="binding site" evidence="1">
    <location>
        <position position="11"/>
    </location>
    <ligand>
        <name>[4Fe-4S] cluster</name>
        <dbReference type="ChEBI" id="CHEBI:49883"/>
    </ligand>
</feature>
<feature type="binding site" evidence="1">
    <location>
        <position position="14"/>
    </location>
    <ligand>
        <name>[4Fe-4S] cluster</name>
        <dbReference type="ChEBI" id="CHEBI:49883"/>
    </ligand>
</feature>
<feature type="binding site" evidence="1">
    <location>
        <position position="87"/>
    </location>
    <ligand>
        <name>[4Fe-4S] cluster</name>
        <dbReference type="ChEBI" id="CHEBI:49883"/>
    </ligand>
</feature>
<feature type="binding site" evidence="1">
    <location>
        <position position="212"/>
    </location>
    <ligand>
        <name>S-adenosyl-L-methionine</name>
        <dbReference type="ChEBI" id="CHEBI:59789"/>
    </ligand>
</feature>
<feature type="binding site" evidence="1">
    <location>
        <position position="241"/>
    </location>
    <ligand>
        <name>S-adenosyl-L-methionine</name>
        <dbReference type="ChEBI" id="CHEBI:59789"/>
    </ligand>
</feature>
<feature type="binding site" evidence="1">
    <location>
        <position position="262"/>
    </location>
    <ligand>
        <name>S-adenosyl-L-methionine</name>
        <dbReference type="ChEBI" id="CHEBI:59789"/>
    </ligand>
</feature>
<feature type="binding site" evidence="1">
    <location>
        <position position="307"/>
    </location>
    <ligand>
        <name>S-adenosyl-L-methionine</name>
        <dbReference type="ChEBI" id="CHEBI:59789"/>
    </ligand>
</feature>
<protein>
    <recommendedName>
        <fullName evidence="1">23S rRNA (uracil(747)-C(5))-methyltransferase RlmC</fullName>
        <ecNumber evidence="1">2.1.1.189</ecNumber>
    </recommendedName>
    <alternativeName>
        <fullName evidence="1">23S rRNA(m5U747)-methyltransferase</fullName>
    </alternativeName>
</protein>
<comment type="function">
    <text evidence="1">Catalyzes the formation of 5-methyl-uridine at position 747 (m5U747) in 23S rRNA.</text>
</comment>
<comment type="catalytic activity">
    <reaction evidence="1">
        <text>uridine(747) in 23S rRNA + S-adenosyl-L-methionine = 5-methyluridine(747) in 23S rRNA + S-adenosyl-L-homocysteine + H(+)</text>
        <dbReference type="Rhea" id="RHEA:42628"/>
        <dbReference type="Rhea" id="RHEA-COMP:10154"/>
        <dbReference type="Rhea" id="RHEA-COMP:10155"/>
        <dbReference type="ChEBI" id="CHEBI:15378"/>
        <dbReference type="ChEBI" id="CHEBI:57856"/>
        <dbReference type="ChEBI" id="CHEBI:59789"/>
        <dbReference type="ChEBI" id="CHEBI:65315"/>
        <dbReference type="ChEBI" id="CHEBI:74447"/>
        <dbReference type="EC" id="2.1.1.189"/>
    </reaction>
</comment>
<comment type="similarity">
    <text evidence="1">Belongs to the class I-like SAM-binding methyltransferase superfamily. RNA M5U methyltransferase family. RlmC subfamily.</text>
</comment>
<comment type="sequence caution" evidence="2">
    <conflict type="frameshift">
        <sequence resource="EMBL-CDS" id="ACY58091"/>
    </conflict>
</comment>
<comment type="sequence caution" evidence="2">
    <conflict type="frameshift">
        <sequence resource="EMBL-CDS" id="ACY58092"/>
    </conflict>
</comment>
<proteinExistence type="inferred from homology"/>
<evidence type="ECO:0000255" key="1">
    <source>
        <dbReference type="HAMAP-Rule" id="MF_01012"/>
    </source>
</evidence>
<evidence type="ECO:0000305" key="2"/>
<reference key="1">
    <citation type="journal article" date="2009" name="Am. J. Trop. Med. Hyg.">
        <title>Spatial variation of Yersinia pestis from Yunnan Province of China.</title>
        <authorList>
            <person name="Zhang Z."/>
            <person name="Hai R."/>
            <person name="Song Z."/>
            <person name="Xia L."/>
            <person name="Liang Y."/>
            <person name="Cai H."/>
            <person name="Liang Y."/>
            <person name="Shen X."/>
            <person name="Zhang E."/>
            <person name="Xu J."/>
            <person name="Yu D."/>
            <person name="Yu X.J."/>
        </authorList>
    </citation>
    <scope>NUCLEOTIDE SEQUENCE [LARGE SCALE GENOMIC DNA]</scope>
    <source>
        <strain>D106004</strain>
    </source>
</reference>
<accession>D0JIM5</accession>
<accession>D0JIM4</accession>
<keyword id="KW-0004">4Fe-4S</keyword>
<keyword id="KW-0408">Iron</keyword>
<keyword id="KW-0411">Iron-sulfur</keyword>
<keyword id="KW-0479">Metal-binding</keyword>
<keyword id="KW-0489">Methyltransferase</keyword>
<keyword id="KW-0698">rRNA processing</keyword>
<keyword id="KW-0949">S-adenosyl-L-methionine</keyword>
<keyword id="KW-0808">Transferase</keyword>